<accession>A6QQL5</accession>
<reference key="1">
    <citation type="submission" date="2007-07" db="EMBL/GenBank/DDBJ databases">
        <authorList>
            <consortium name="NIH - Mammalian Gene Collection (MGC) project"/>
        </authorList>
    </citation>
    <scope>NUCLEOTIDE SEQUENCE [LARGE SCALE MRNA]</scope>
    <source>
        <strain>Crossbred X Angus</strain>
        <tissue>Liver</tissue>
    </source>
</reference>
<gene>
    <name type="primary">CIMIP6</name>
</gene>
<sequence length="290" mass="32740">MEGKEDKQQQHKIEDAGILYVTEKEEFKHEKKPGKSIQHSKPCVGRGRVYYAKFINTNVRTCNEPVPYIDVKKEPENQGDWWPHGKGLENPFQPPYDTKSTQRSDFKKPTCPLVSPVKHSKLQKPSYGIVPLVSPDASAELQRNFKEHISFIHQYDARKTPNEPIRGKRHGVFVQTEIKPGSRPTVPERTEVLLNASGSCSSEQSKKTEKGNSAESKMISPGLCRQNSQELLETKTHLSETDIRVAANASLRRPEKREKTAKVFQIAVVNALLTRHDPLSPPIKSQDKSG</sequence>
<evidence type="ECO:0000250" key="1">
    <source>
        <dbReference type="UniProtKB" id="Q8N5S3"/>
    </source>
</evidence>
<evidence type="ECO:0000256" key="2">
    <source>
        <dbReference type="SAM" id="MobiDB-lite"/>
    </source>
</evidence>
<evidence type="ECO:0000305" key="3"/>
<comment type="subcellular location">
    <subcellularLocation>
        <location evidence="3">Cell projection</location>
        <location evidence="3">Cilium</location>
    </subcellularLocation>
</comment>
<proteinExistence type="evidence at transcript level"/>
<dbReference type="EMBL" id="BC149887">
    <property type="protein sequence ID" value="AAI49888.1"/>
    <property type="molecule type" value="mRNA"/>
</dbReference>
<dbReference type="RefSeq" id="NP_001094753.1">
    <property type="nucleotide sequence ID" value="NM_001101283.2"/>
</dbReference>
<dbReference type="FunCoup" id="A6QQL5">
    <property type="interactions" value="15"/>
</dbReference>
<dbReference type="STRING" id="9913.ENSBTAP00000009010"/>
<dbReference type="PaxDb" id="9913-ENSBTAP00000009010"/>
<dbReference type="Ensembl" id="ENSBTAT00000009010.5">
    <property type="protein sequence ID" value="ENSBTAP00000009010.4"/>
    <property type="gene ID" value="ENSBTAG00000006861.6"/>
</dbReference>
<dbReference type="GeneID" id="782317"/>
<dbReference type="KEGG" id="bta:782317"/>
<dbReference type="CTD" id="782317"/>
<dbReference type="VEuPathDB" id="HostDB:ENSBTAG00000006861"/>
<dbReference type="VGNC" id="VGNC:52620">
    <property type="gene designation" value="C11H2orf73"/>
</dbReference>
<dbReference type="eggNOG" id="ENOG502S2FJ">
    <property type="taxonomic scope" value="Eukaryota"/>
</dbReference>
<dbReference type="GeneTree" id="ENSGT00390000005045"/>
<dbReference type="HOGENOM" id="CLU_084649_0_0_1"/>
<dbReference type="InParanoid" id="A6QQL5"/>
<dbReference type="OMA" id="RNDFQKP"/>
<dbReference type="OrthoDB" id="9971371at2759"/>
<dbReference type="TreeFam" id="TF337686"/>
<dbReference type="Proteomes" id="UP000009136">
    <property type="component" value="Chromosome 11"/>
</dbReference>
<dbReference type="Bgee" id="ENSBTAG00000006861">
    <property type="expression patterns" value="Expressed in semen and 50 other cell types or tissues"/>
</dbReference>
<dbReference type="GO" id="GO:0005929">
    <property type="term" value="C:cilium"/>
    <property type="evidence" value="ECO:0007669"/>
    <property type="project" value="UniProtKB-SubCell"/>
</dbReference>
<dbReference type="InterPro" id="IPR031365">
    <property type="entry name" value="CMIP6"/>
</dbReference>
<dbReference type="PANTHER" id="PTHR35087:SF1">
    <property type="entry name" value="RIKEN CDNA 4930505A04 GENE"/>
    <property type="match status" value="1"/>
</dbReference>
<dbReference type="PANTHER" id="PTHR35087">
    <property type="entry name" value="SIMILAR TO HYPOTHETICAL PROTEIN FLJ40298"/>
    <property type="match status" value="1"/>
</dbReference>
<dbReference type="Pfam" id="PF15667">
    <property type="entry name" value="CMIP6"/>
    <property type="match status" value="1"/>
</dbReference>
<keyword id="KW-0966">Cell projection</keyword>
<keyword id="KW-1185">Reference proteome</keyword>
<organism>
    <name type="scientific">Bos taurus</name>
    <name type="common">Bovine</name>
    <dbReference type="NCBI Taxonomy" id="9913"/>
    <lineage>
        <taxon>Eukaryota</taxon>
        <taxon>Metazoa</taxon>
        <taxon>Chordata</taxon>
        <taxon>Craniata</taxon>
        <taxon>Vertebrata</taxon>
        <taxon>Euteleostomi</taxon>
        <taxon>Mammalia</taxon>
        <taxon>Eutheria</taxon>
        <taxon>Laurasiatheria</taxon>
        <taxon>Artiodactyla</taxon>
        <taxon>Ruminantia</taxon>
        <taxon>Pecora</taxon>
        <taxon>Bovidae</taxon>
        <taxon>Bovinae</taxon>
        <taxon>Bos</taxon>
    </lineage>
</organism>
<protein>
    <recommendedName>
        <fullName>Ciliary microtubule inner protein 6</fullName>
    </recommendedName>
</protein>
<name>CMIP6_BOVIN</name>
<feature type="chain" id="PRO_0000332212" description="Ciliary microtubule inner protein 6">
    <location>
        <begin position="1"/>
        <end position="290"/>
    </location>
</feature>
<feature type="region of interest" description="Disordered" evidence="2">
    <location>
        <begin position="76"/>
        <end position="112"/>
    </location>
</feature>
<feature type="region of interest" description="Mn 1" evidence="1">
    <location>
        <begin position="128"/>
        <end position="160"/>
    </location>
</feature>
<feature type="region of interest" description="Disordered" evidence="2">
    <location>
        <begin position="197"/>
        <end position="228"/>
    </location>
</feature>
<feature type="region of interest" description="Mn 2" evidence="1">
    <location>
        <begin position="213"/>
        <end position="246"/>
    </location>
</feature>